<organism>
    <name type="scientific">Mycolicibacterium gilvum (strain PYR-GCK)</name>
    <name type="common">Mycobacterium gilvum (strain PYR-GCK)</name>
    <dbReference type="NCBI Taxonomy" id="350054"/>
    <lineage>
        <taxon>Bacteria</taxon>
        <taxon>Bacillati</taxon>
        <taxon>Actinomycetota</taxon>
        <taxon>Actinomycetes</taxon>
        <taxon>Mycobacteriales</taxon>
        <taxon>Mycobacteriaceae</taxon>
        <taxon>Mycolicibacterium</taxon>
    </lineage>
</organism>
<feature type="chain" id="PRO_1000074090" description="Holliday junction branch migration complex subunit RuvB">
    <location>
        <begin position="1"/>
        <end position="357"/>
    </location>
</feature>
<feature type="region of interest" description="Large ATPase domain (RuvB-L)" evidence="1">
    <location>
        <begin position="1"/>
        <end position="195"/>
    </location>
</feature>
<feature type="region of interest" description="Disordered" evidence="2">
    <location>
        <begin position="1"/>
        <end position="27"/>
    </location>
</feature>
<feature type="region of interest" description="Small ATPAse domain (RuvB-S)" evidence="1">
    <location>
        <begin position="196"/>
        <end position="266"/>
    </location>
</feature>
<feature type="region of interest" description="Head domain (RuvB-H)" evidence="1">
    <location>
        <begin position="269"/>
        <end position="357"/>
    </location>
</feature>
<feature type="binding site" evidence="1">
    <location>
        <position position="34"/>
    </location>
    <ligand>
        <name>ATP</name>
        <dbReference type="ChEBI" id="CHEBI:30616"/>
    </ligand>
</feature>
<feature type="binding site" evidence="1">
    <location>
        <position position="35"/>
    </location>
    <ligand>
        <name>ATP</name>
        <dbReference type="ChEBI" id="CHEBI:30616"/>
    </ligand>
</feature>
<feature type="binding site" evidence="1">
    <location>
        <position position="76"/>
    </location>
    <ligand>
        <name>ATP</name>
        <dbReference type="ChEBI" id="CHEBI:30616"/>
    </ligand>
</feature>
<feature type="binding site" evidence="1">
    <location>
        <position position="79"/>
    </location>
    <ligand>
        <name>ATP</name>
        <dbReference type="ChEBI" id="CHEBI:30616"/>
    </ligand>
</feature>
<feature type="binding site" evidence="1">
    <location>
        <position position="80"/>
    </location>
    <ligand>
        <name>ATP</name>
        <dbReference type="ChEBI" id="CHEBI:30616"/>
    </ligand>
</feature>
<feature type="binding site" evidence="1">
    <location>
        <position position="80"/>
    </location>
    <ligand>
        <name>Mg(2+)</name>
        <dbReference type="ChEBI" id="CHEBI:18420"/>
    </ligand>
</feature>
<feature type="binding site" evidence="1">
    <location>
        <position position="81"/>
    </location>
    <ligand>
        <name>ATP</name>
        <dbReference type="ChEBI" id="CHEBI:30616"/>
    </ligand>
</feature>
<feature type="binding site" evidence="1">
    <location>
        <begin position="142"/>
        <end position="144"/>
    </location>
    <ligand>
        <name>ATP</name>
        <dbReference type="ChEBI" id="CHEBI:30616"/>
    </ligand>
</feature>
<feature type="binding site" evidence="1">
    <location>
        <position position="185"/>
    </location>
    <ligand>
        <name>ATP</name>
        <dbReference type="ChEBI" id="CHEBI:30616"/>
    </ligand>
</feature>
<feature type="binding site" evidence="1">
    <location>
        <position position="195"/>
    </location>
    <ligand>
        <name>ATP</name>
        <dbReference type="ChEBI" id="CHEBI:30616"/>
    </ligand>
</feature>
<feature type="binding site" evidence="1">
    <location>
        <position position="232"/>
    </location>
    <ligand>
        <name>ATP</name>
        <dbReference type="ChEBI" id="CHEBI:30616"/>
    </ligand>
</feature>
<feature type="binding site" evidence="1">
    <location>
        <position position="324"/>
    </location>
    <ligand>
        <name>DNA</name>
        <dbReference type="ChEBI" id="CHEBI:16991"/>
    </ligand>
</feature>
<feature type="binding site" evidence="1">
    <location>
        <position position="329"/>
    </location>
    <ligand>
        <name>DNA</name>
        <dbReference type="ChEBI" id="CHEBI:16991"/>
    </ligand>
</feature>
<comment type="function">
    <text evidence="1">The RuvA-RuvB-RuvC complex processes Holliday junction (HJ) DNA during genetic recombination and DNA repair, while the RuvA-RuvB complex plays an important role in the rescue of blocked DNA replication forks via replication fork reversal (RFR). RuvA specifically binds to HJ cruciform DNA, conferring on it an open structure. The RuvB hexamer acts as an ATP-dependent pump, pulling dsDNA into and through the RuvAB complex. RuvB forms 2 homohexamers on either side of HJ DNA bound by 1 or 2 RuvA tetramers; 4 subunits per hexamer contact DNA at a time. Coordinated motions by a converter formed by DNA-disengaged RuvB subunits stimulates ATP hydrolysis and nucleotide exchange. Immobilization of the converter enables RuvB to convert the ATP-contained energy into a lever motion, pulling 2 nucleotides of DNA out of the RuvA tetramer per ATP hydrolyzed, thus driving DNA branch migration. The RuvB motors rotate together with the DNA substrate, which together with the progressing nucleotide cycle form the mechanistic basis for DNA recombination by continuous HJ branch migration. Branch migration allows RuvC to scan DNA until it finds its consensus sequence, where it cleaves and resolves cruciform DNA.</text>
</comment>
<comment type="catalytic activity">
    <reaction evidence="1">
        <text>ATP + H2O = ADP + phosphate + H(+)</text>
        <dbReference type="Rhea" id="RHEA:13065"/>
        <dbReference type="ChEBI" id="CHEBI:15377"/>
        <dbReference type="ChEBI" id="CHEBI:15378"/>
        <dbReference type="ChEBI" id="CHEBI:30616"/>
        <dbReference type="ChEBI" id="CHEBI:43474"/>
        <dbReference type="ChEBI" id="CHEBI:456216"/>
    </reaction>
</comment>
<comment type="subunit">
    <text evidence="1">Homohexamer. Forms an RuvA(8)-RuvB(12)-Holliday junction (HJ) complex. HJ DNA is sandwiched between 2 RuvA tetramers; dsDNA enters through RuvA and exits via RuvB. An RuvB hexamer assembles on each DNA strand where it exits the tetramer. Each RuvB hexamer is contacted by two RuvA subunits (via domain III) on 2 adjacent RuvB subunits; this complex drives branch migration. In the full resolvosome a probable DNA-RuvA(4)-RuvB(12)-RuvC(2) complex forms which resolves the HJ.</text>
</comment>
<comment type="subcellular location">
    <subcellularLocation>
        <location evidence="1">Cytoplasm</location>
    </subcellularLocation>
</comment>
<comment type="domain">
    <text evidence="1">Has 3 domains, the large (RuvB-L) and small ATPase (RuvB-S) domains and the C-terminal head (RuvB-H) domain. The head domain binds DNA, while the ATPase domains jointly bind ATP, ADP or are empty depending on the state of the subunit in the translocation cycle. During a single DNA translocation step the structure of each domain remains the same, but their relative positions change.</text>
</comment>
<comment type="similarity">
    <text evidence="1">Belongs to the RuvB family.</text>
</comment>
<gene>
    <name evidence="1" type="primary">ruvB</name>
    <name type="ordered locus">Mflv_3824</name>
</gene>
<reference key="1">
    <citation type="submission" date="2007-04" db="EMBL/GenBank/DDBJ databases">
        <title>Complete sequence of chromosome of Mycobacterium gilvum PYR-GCK.</title>
        <authorList>
            <consortium name="US DOE Joint Genome Institute"/>
            <person name="Copeland A."/>
            <person name="Lucas S."/>
            <person name="Lapidus A."/>
            <person name="Barry K."/>
            <person name="Detter J.C."/>
            <person name="Glavina del Rio T."/>
            <person name="Hammon N."/>
            <person name="Israni S."/>
            <person name="Dalin E."/>
            <person name="Tice H."/>
            <person name="Pitluck S."/>
            <person name="Chain P."/>
            <person name="Malfatti S."/>
            <person name="Shin M."/>
            <person name="Vergez L."/>
            <person name="Schmutz J."/>
            <person name="Larimer F."/>
            <person name="Land M."/>
            <person name="Hauser L."/>
            <person name="Kyrpides N."/>
            <person name="Mikhailova N."/>
            <person name="Miller C."/>
            <person name="Richardson P."/>
        </authorList>
    </citation>
    <scope>NUCLEOTIDE SEQUENCE [LARGE SCALE GENOMIC DNA]</scope>
    <source>
        <strain>PYR-GCK</strain>
    </source>
</reference>
<proteinExistence type="inferred from homology"/>
<protein>
    <recommendedName>
        <fullName evidence="1">Holliday junction branch migration complex subunit RuvB</fullName>
        <ecNumber evidence="1">3.6.4.-</ecNumber>
    </recommendedName>
</protein>
<sequence>MGRFSNADGPGDDADEREVTPALTVGEGDIDASLRPRSLGEFIGQPRVREQLQLVLEGAKNRGGTPDHILLSGPPGLGKTSLAMIIAAELGSSLRVTSGPALERAGDLAAMLSNLIEGDVLFIDEIHRIARPAEEMLYLAMEDFRVDVVVGKGPGATSIPLEVAPFTLVGATTRSGALTGPLRDRFGFTAHMDFYEPAELERVLARSAGILGIELGAEAGAEIARRSRGTPRIANRLLRRVRDYAEVRADGVITRDIAKYALEVYDVDELGLDRLDRAVLSALTRSFGGGPVGVSTLAVAVGEEATTVEEVCEPFLVRAGMIARTPRGRVATAQAWKHLGMTPPAGAGGLGQVGLFE</sequence>
<evidence type="ECO:0000255" key="1">
    <source>
        <dbReference type="HAMAP-Rule" id="MF_00016"/>
    </source>
</evidence>
<evidence type="ECO:0000256" key="2">
    <source>
        <dbReference type="SAM" id="MobiDB-lite"/>
    </source>
</evidence>
<dbReference type="EC" id="3.6.4.-" evidence="1"/>
<dbReference type="EMBL" id="CP000656">
    <property type="protein sequence ID" value="ABP46296.1"/>
    <property type="molecule type" value="Genomic_DNA"/>
</dbReference>
<dbReference type="SMR" id="A4TBQ5"/>
<dbReference type="STRING" id="350054.Mflv_3824"/>
<dbReference type="KEGG" id="mgi:Mflv_3824"/>
<dbReference type="eggNOG" id="COG2255">
    <property type="taxonomic scope" value="Bacteria"/>
</dbReference>
<dbReference type="HOGENOM" id="CLU_055599_1_0_11"/>
<dbReference type="OrthoDB" id="9804478at2"/>
<dbReference type="GO" id="GO:0005737">
    <property type="term" value="C:cytoplasm"/>
    <property type="evidence" value="ECO:0007669"/>
    <property type="project" value="UniProtKB-SubCell"/>
</dbReference>
<dbReference type="GO" id="GO:0048476">
    <property type="term" value="C:Holliday junction resolvase complex"/>
    <property type="evidence" value="ECO:0007669"/>
    <property type="project" value="UniProtKB-UniRule"/>
</dbReference>
<dbReference type="GO" id="GO:0005524">
    <property type="term" value="F:ATP binding"/>
    <property type="evidence" value="ECO:0007669"/>
    <property type="project" value="UniProtKB-UniRule"/>
</dbReference>
<dbReference type="GO" id="GO:0016887">
    <property type="term" value="F:ATP hydrolysis activity"/>
    <property type="evidence" value="ECO:0007669"/>
    <property type="project" value="InterPro"/>
</dbReference>
<dbReference type="GO" id="GO:0000400">
    <property type="term" value="F:four-way junction DNA binding"/>
    <property type="evidence" value="ECO:0007669"/>
    <property type="project" value="UniProtKB-UniRule"/>
</dbReference>
<dbReference type="GO" id="GO:0009378">
    <property type="term" value="F:four-way junction helicase activity"/>
    <property type="evidence" value="ECO:0007669"/>
    <property type="project" value="InterPro"/>
</dbReference>
<dbReference type="GO" id="GO:0006310">
    <property type="term" value="P:DNA recombination"/>
    <property type="evidence" value="ECO:0007669"/>
    <property type="project" value="UniProtKB-UniRule"/>
</dbReference>
<dbReference type="GO" id="GO:0006281">
    <property type="term" value="P:DNA repair"/>
    <property type="evidence" value="ECO:0007669"/>
    <property type="project" value="UniProtKB-UniRule"/>
</dbReference>
<dbReference type="CDD" id="cd00009">
    <property type="entry name" value="AAA"/>
    <property type="match status" value="1"/>
</dbReference>
<dbReference type="Gene3D" id="1.10.8.60">
    <property type="match status" value="1"/>
</dbReference>
<dbReference type="Gene3D" id="3.40.50.300">
    <property type="entry name" value="P-loop containing nucleotide triphosphate hydrolases"/>
    <property type="match status" value="1"/>
</dbReference>
<dbReference type="Gene3D" id="1.10.10.10">
    <property type="entry name" value="Winged helix-like DNA-binding domain superfamily/Winged helix DNA-binding domain"/>
    <property type="match status" value="1"/>
</dbReference>
<dbReference type="HAMAP" id="MF_00016">
    <property type="entry name" value="DNA_HJ_migration_RuvB"/>
    <property type="match status" value="1"/>
</dbReference>
<dbReference type="InterPro" id="IPR003593">
    <property type="entry name" value="AAA+_ATPase"/>
</dbReference>
<dbReference type="InterPro" id="IPR041445">
    <property type="entry name" value="AAA_lid_4"/>
</dbReference>
<dbReference type="InterPro" id="IPR004605">
    <property type="entry name" value="DNA_helicase_Holl-junc_RuvB"/>
</dbReference>
<dbReference type="InterPro" id="IPR027417">
    <property type="entry name" value="P-loop_NTPase"/>
</dbReference>
<dbReference type="InterPro" id="IPR008824">
    <property type="entry name" value="RuvB-like_N"/>
</dbReference>
<dbReference type="InterPro" id="IPR008823">
    <property type="entry name" value="RuvB_C"/>
</dbReference>
<dbReference type="InterPro" id="IPR036388">
    <property type="entry name" value="WH-like_DNA-bd_sf"/>
</dbReference>
<dbReference type="InterPro" id="IPR036390">
    <property type="entry name" value="WH_DNA-bd_sf"/>
</dbReference>
<dbReference type="NCBIfam" id="NF000868">
    <property type="entry name" value="PRK00080.1"/>
    <property type="match status" value="1"/>
</dbReference>
<dbReference type="NCBIfam" id="TIGR00635">
    <property type="entry name" value="ruvB"/>
    <property type="match status" value="1"/>
</dbReference>
<dbReference type="PANTHER" id="PTHR42848">
    <property type="match status" value="1"/>
</dbReference>
<dbReference type="PANTHER" id="PTHR42848:SF1">
    <property type="entry name" value="HOLLIDAY JUNCTION BRANCH MIGRATION COMPLEX SUBUNIT RUVB"/>
    <property type="match status" value="1"/>
</dbReference>
<dbReference type="Pfam" id="PF17864">
    <property type="entry name" value="AAA_lid_4"/>
    <property type="match status" value="1"/>
</dbReference>
<dbReference type="Pfam" id="PF05491">
    <property type="entry name" value="RuvB_C"/>
    <property type="match status" value="1"/>
</dbReference>
<dbReference type="Pfam" id="PF05496">
    <property type="entry name" value="RuvB_N"/>
    <property type="match status" value="1"/>
</dbReference>
<dbReference type="SMART" id="SM00382">
    <property type="entry name" value="AAA"/>
    <property type="match status" value="1"/>
</dbReference>
<dbReference type="SUPFAM" id="SSF52540">
    <property type="entry name" value="P-loop containing nucleoside triphosphate hydrolases"/>
    <property type="match status" value="1"/>
</dbReference>
<dbReference type="SUPFAM" id="SSF46785">
    <property type="entry name" value="Winged helix' DNA-binding domain"/>
    <property type="match status" value="1"/>
</dbReference>
<name>RUVB_MYCGI</name>
<accession>A4TBQ5</accession>
<keyword id="KW-0067">ATP-binding</keyword>
<keyword id="KW-0963">Cytoplasm</keyword>
<keyword id="KW-0227">DNA damage</keyword>
<keyword id="KW-0233">DNA recombination</keyword>
<keyword id="KW-0234">DNA repair</keyword>
<keyword id="KW-0238">DNA-binding</keyword>
<keyword id="KW-0378">Hydrolase</keyword>
<keyword id="KW-0547">Nucleotide-binding</keyword>